<sequence length="203" mass="22503">MSGRSVRAETRSRAKDDIKKVMAAIERVRRWEKKWVTVGDTSLRIFKWVPVVDTKEKEKSKVSVGGEMQRKNFPSEESSDNACSVLLDFQDENSNQSSLSDSYQHKAAADSSNNSSPPASEPVSPAPQSLDYRTDDPQPPTLGQEIMEEPLLQSSEIADEPPTLIKEDLLPLTAQEDEDSCGAPPLKRICTEQVSVIQMVPLS</sequence>
<reference key="1">
    <citation type="submission" date="2004-03" db="EMBL/GenBank/DDBJ databases">
        <authorList>
            <consortium name="NIH - Zebrafish Gene Collection (ZGC) project"/>
        </authorList>
    </citation>
    <scope>NUCLEOTIDE SEQUENCE [LARGE SCALE MRNA]</scope>
    <source>
        <tissue>Kidney</tissue>
    </source>
</reference>
<evidence type="ECO:0000256" key="1">
    <source>
        <dbReference type="SAM" id="MobiDB-lite"/>
    </source>
</evidence>
<evidence type="ECO:0000305" key="2"/>
<organism>
    <name type="scientific">Danio rerio</name>
    <name type="common">Zebrafish</name>
    <name type="synonym">Brachydanio rerio</name>
    <dbReference type="NCBI Taxonomy" id="7955"/>
    <lineage>
        <taxon>Eukaryota</taxon>
        <taxon>Metazoa</taxon>
        <taxon>Chordata</taxon>
        <taxon>Craniata</taxon>
        <taxon>Vertebrata</taxon>
        <taxon>Euteleostomi</taxon>
        <taxon>Actinopterygii</taxon>
        <taxon>Neopterygii</taxon>
        <taxon>Teleostei</taxon>
        <taxon>Ostariophysi</taxon>
        <taxon>Cypriniformes</taxon>
        <taxon>Danionidae</taxon>
        <taxon>Danioninae</taxon>
        <taxon>Danio</taxon>
    </lineage>
</organism>
<protein>
    <recommendedName>
        <fullName>B-cell CLL/lymphoma 7 protein family member B-A</fullName>
    </recommendedName>
</protein>
<name>BC7BA_DANRE</name>
<keyword id="KW-1185">Reference proteome</keyword>
<proteinExistence type="evidence at transcript level"/>
<dbReference type="EMBL" id="BC067572">
    <property type="protein sequence ID" value="AAH67572.1"/>
    <property type="molecule type" value="mRNA"/>
</dbReference>
<dbReference type="RefSeq" id="NP_998330.1">
    <property type="nucleotide sequence ID" value="NM_213165.1"/>
</dbReference>
<dbReference type="FunCoup" id="Q6NWJ0">
    <property type="interactions" value="1914"/>
</dbReference>
<dbReference type="STRING" id="7955.ENSDARP00000152977"/>
<dbReference type="PaxDb" id="7955-ENSDARP00000090592"/>
<dbReference type="Ensembl" id="ENSDART00000184565">
    <property type="protein sequence ID" value="ENSDARP00000152977"/>
    <property type="gene ID" value="ENSDARG00000111877"/>
</dbReference>
<dbReference type="GeneID" id="406444"/>
<dbReference type="KEGG" id="dre:406444"/>
<dbReference type="AGR" id="ZFIN:ZDB-GENE-040426-2193"/>
<dbReference type="CTD" id="406444"/>
<dbReference type="ZFIN" id="ZDB-GENE-040426-2193">
    <property type="gene designation" value="bcl7ba"/>
</dbReference>
<dbReference type="eggNOG" id="KOG4095">
    <property type="taxonomic scope" value="Eukaryota"/>
</dbReference>
<dbReference type="HOGENOM" id="CLU_110835_1_0_1"/>
<dbReference type="InParanoid" id="Q6NWJ0"/>
<dbReference type="OMA" id="WVPVTDN"/>
<dbReference type="OrthoDB" id="5989898at2759"/>
<dbReference type="PhylomeDB" id="Q6NWJ0"/>
<dbReference type="TreeFam" id="TF317441"/>
<dbReference type="PRO" id="PR:Q6NWJ0"/>
<dbReference type="Proteomes" id="UP000000437">
    <property type="component" value="Chromosome 10"/>
</dbReference>
<dbReference type="Bgee" id="ENSDARG00000111877">
    <property type="expression patterns" value="Expressed in cleaving embryo and 25 other cell types or tissues"/>
</dbReference>
<dbReference type="InterPro" id="IPR006804">
    <property type="entry name" value="BCL7"/>
</dbReference>
<dbReference type="PANTHER" id="PTHR12767:SF5">
    <property type="entry name" value="B-CELL CLL_LYMPHOMA 7 PROTEIN FAMILY MEMBER B"/>
    <property type="match status" value="1"/>
</dbReference>
<dbReference type="PANTHER" id="PTHR12767">
    <property type="entry name" value="BCL7 RELATED"/>
    <property type="match status" value="1"/>
</dbReference>
<dbReference type="Pfam" id="PF04714">
    <property type="entry name" value="BCL_N"/>
    <property type="match status" value="1"/>
</dbReference>
<gene>
    <name type="primary">bcl7ba</name>
    <name type="synonym">bcl7b</name>
    <name type="ORF">zgc:85678</name>
</gene>
<comment type="similarity">
    <text evidence="2">Belongs to the BCL7 family.</text>
</comment>
<feature type="chain" id="PRO_0000239832" description="B-cell CLL/lymphoma 7 protein family member B-A">
    <location>
        <begin position="1"/>
        <end position="203"/>
    </location>
</feature>
<feature type="region of interest" description="Disordered" evidence="1">
    <location>
        <begin position="55"/>
        <end position="80"/>
    </location>
</feature>
<feature type="region of interest" description="Disordered" evidence="1">
    <location>
        <begin position="94"/>
        <end position="148"/>
    </location>
</feature>
<feature type="compositionally biased region" description="Low complexity" evidence="1">
    <location>
        <begin position="109"/>
        <end position="129"/>
    </location>
</feature>
<accession>Q6NWJ0</accession>